<sequence length="530" mass="59740">MHFAIILLFLLVIIAIVYTYVDLIDVHHEEVRYPITVFDNTRAPLIEPPSEIVIEGNAHECHKTLTPCFTHGDCDLCREGLANCQLFDEDTIVKMRGDDGQEHETLIRAGEAYCLALDRERARSCNPNTGVWLLAETETGFALLCNCLRPGLVTQLNMYEDCNVPVGCAPHGRIDNINSASIRCVCDDGYVSDYNADTETPYCRPRTVRDVMYDESFFPRAPCADGQVRLDHPALNDFYRRHFRLEDICVIDPCSVDPISGQRTSGRLFHQPTVNGVGINGCNCPADDGLLPVFNRHTADTGMVRQSDRTVANACLQPFNVHMLSLRHVDYKFFWGRSDHTEFADADMVFQANVNQLSHERYRAILYSLLESHPDVTEIVTVNMGVMKISVSYDTTLKNILLPSSVFRLFRFKESGTAQPVCFFPGVGRCITVNSDSCIRRHAGGQVWTAETFTNSWCVLSREGTHIKVWSRASRYPRGDAPAALRLRGFFLNNDRERNTIRAVTTGDMTQGQQIDALTQILETYPNYSV</sequence>
<keyword id="KW-0472">Membrane</keyword>
<keyword id="KW-1185">Reference proteome</keyword>
<keyword id="KW-0732">Signal</keyword>
<keyword id="KW-0946">Virion</keyword>
<proteinExistence type="evidence at protein level"/>
<organism>
    <name type="scientific">Autographa californica nuclear polyhedrosis virus</name>
    <name type="common">AcMNPV</name>
    <dbReference type="NCBI Taxonomy" id="46015"/>
    <lineage>
        <taxon>Viruses</taxon>
        <taxon>Viruses incertae sedis</taxon>
        <taxon>Naldaviricetes</taxon>
        <taxon>Lefavirales</taxon>
        <taxon>Baculoviridae</taxon>
        <taxon>Alphabaculovirus</taxon>
        <taxon>Alphabaculovirus aucalifornicae</taxon>
    </lineage>
</organism>
<protein>
    <recommendedName>
        <fullName>Per os infectivity factor 1</fullName>
        <shortName>PIF1</shortName>
    </recommendedName>
</protein>
<comment type="function">
    <text evidence="2">Per os infectivity factor that mediates the specific binding of occluded virions (ODV) to the host midgut target cells.</text>
</comment>
<comment type="subunit">
    <text evidence="3">Forms the PIF complex together with PIF2 and PIF3. The complex also interacts with per os infectivity factor PIF0.</text>
</comment>
<comment type="subcellular location">
    <subcellularLocation>
        <location evidence="2">Virion membrane</location>
    </subcellularLocation>
</comment>
<feature type="signal peptide" evidence="1">
    <location>
        <begin position="1"/>
        <end position="15"/>
    </location>
</feature>
<feature type="chain" id="PRO_0000036755" description="Per os infectivity factor 1">
    <location>
        <begin position="16"/>
        <end position="530"/>
    </location>
</feature>
<name>PIF1_NPVAC</name>
<accession>P41672</accession>
<reference key="1">
    <citation type="journal article" date="1994" name="Virology">
        <title>The complete DNA sequence of Autographa californica nuclear polyhedrosis virus.</title>
        <authorList>
            <person name="Ayres M.D."/>
            <person name="Howard S.C."/>
            <person name="Kuzio J."/>
            <person name="Lopez-Ferber M."/>
            <person name="Possee R.D."/>
        </authorList>
    </citation>
    <scope>NUCLEOTIDE SEQUENCE [LARGE SCALE GENOMIC DNA]</scope>
    <source>
        <strain>C6</strain>
    </source>
</reference>
<reference key="2">
    <citation type="journal article" date="2005" name="J. Virol.">
        <title>Specific binding of Autographa californica M nucleopolyhedrovirus occlusion-derived virus to midgut cells of Heliothis virescens larvae is mediated by products of pif genes Ac119 and Ac022 but not by Ac115.</title>
        <authorList>
            <person name="Ohkawa T."/>
            <person name="Washburn J.O."/>
            <person name="Sitapara R."/>
            <person name="Sid E."/>
            <person name="Volkman L.E."/>
        </authorList>
    </citation>
    <scope>FUNCTION</scope>
    <scope>SUBCELLULAR LOCATION</scope>
</reference>
<reference key="3">
    <citation type="journal article" date="2010" name="J. Virol.">
        <title>Baculovirus per os infectivity factors form a complex on the surface of occlusion-derived virus.</title>
        <authorList>
            <person name="Peng K."/>
            <person name="van Oers M.M."/>
            <person name="Hu Z."/>
            <person name="van Lent J.W."/>
            <person name="Vlak J.M."/>
        </authorList>
    </citation>
    <scope>INTERACTION WITH PIF2; PIF3 AND PIF0</scope>
</reference>
<evidence type="ECO:0000255" key="1"/>
<evidence type="ECO:0000269" key="2">
    <source>
    </source>
</evidence>
<evidence type="ECO:0000269" key="3">
    <source>
    </source>
</evidence>
<organismHost>
    <name type="scientific">Lepidoptera</name>
    <name type="common">butterflies and moths</name>
    <dbReference type="NCBI Taxonomy" id="7088"/>
</organismHost>
<dbReference type="EMBL" id="L22858">
    <property type="protein sequence ID" value="AAA66749.1"/>
    <property type="molecule type" value="Genomic_DNA"/>
</dbReference>
<dbReference type="PIR" id="H72864">
    <property type="entry name" value="H72864"/>
</dbReference>
<dbReference type="RefSeq" id="NP_054149.1">
    <property type="nucleotide sequence ID" value="NC_001623.1"/>
</dbReference>
<dbReference type="GeneID" id="1403952"/>
<dbReference type="KEGG" id="vg:1403952"/>
<dbReference type="OrthoDB" id="1963at10239"/>
<dbReference type="Proteomes" id="UP000008292">
    <property type="component" value="Segment"/>
</dbReference>
<dbReference type="GO" id="GO:0016020">
    <property type="term" value="C:membrane"/>
    <property type="evidence" value="ECO:0007669"/>
    <property type="project" value="UniProtKB-KW"/>
</dbReference>
<dbReference type="GO" id="GO:0055036">
    <property type="term" value="C:virion membrane"/>
    <property type="evidence" value="ECO:0007669"/>
    <property type="project" value="UniProtKB-SubCell"/>
</dbReference>
<dbReference type="InterPro" id="IPR007784">
    <property type="entry name" value="PIR"/>
</dbReference>
<dbReference type="Pfam" id="PF05092">
    <property type="entry name" value="PIF"/>
    <property type="match status" value="1"/>
</dbReference>